<sequence>MATKLQDGNIPCLAATPSEPRPTVLVFDSGVGGLSVYDEIRHLLPDLHYIYAFDNVAFPYGEKSEVFIVERVVEIVTAVQERYPLALAVVACNTASTVSLPALREKFDFPVVGVVPAIKPAARLTANGIVGLLATRGTVKRSYTHELIARFANECQIEMLGSAEMVELAEAKLHGEDVSLDALKRILRPWLRMKEPPDTVVLGCTHFPLLQEELLQVLPEGTRLVDSGAAIARRTAWLLEHEAPDAKSADANIAFCMAMTPEAEQLLPVLQRYGFETLEKLAVLD</sequence>
<evidence type="ECO:0000255" key="1">
    <source>
        <dbReference type="HAMAP-Rule" id="MF_00258"/>
    </source>
</evidence>
<proteinExistence type="inferred from homology"/>
<feature type="chain" id="PRO_1000125609" description="Glutamate racemase">
    <location>
        <begin position="1"/>
        <end position="285"/>
    </location>
</feature>
<feature type="active site" description="Proton donor/acceptor" evidence="1">
    <location>
        <position position="92"/>
    </location>
</feature>
<feature type="active site" description="Proton donor/acceptor" evidence="1">
    <location>
        <position position="204"/>
    </location>
</feature>
<feature type="binding site" evidence="1">
    <location>
        <begin position="28"/>
        <end position="29"/>
    </location>
    <ligand>
        <name>substrate</name>
    </ligand>
</feature>
<feature type="binding site" evidence="1">
    <location>
        <begin position="60"/>
        <end position="61"/>
    </location>
    <ligand>
        <name>substrate</name>
    </ligand>
</feature>
<feature type="binding site" evidence="1">
    <location>
        <begin position="93"/>
        <end position="94"/>
    </location>
    <ligand>
        <name>substrate</name>
    </ligand>
</feature>
<feature type="binding site" evidence="1">
    <location>
        <begin position="205"/>
        <end position="206"/>
    </location>
    <ligand>
        <name>substrate</name>
    </ligand>
</feature>
<keyword id="KW-0133">Cell shape</keyword>
<keyword id="KW-0961">Cell wall biogenesis/degradation</keyword>
<keyword id="KW-0413">Isomerase</keyword>
<keyword id="KW-0573">Peptidoglycan synthesis</keyword>
<name>MURI_ECO81</name>
<comment type="function">
    <text evidence="1">Provides the (R)-glutamate required for cell wall biosynthesis.</text>
</comment>
<comment type="catalytic activity">
    <reaction evidence="1">
        <text>L-glutamate = D-glutamate</text>
        <dbReference type="Rhea" id="RHEA:12813"/>
        <dbReference type="ChEBI" id="CHEBI:29985"/>
        <dbReference type="ChEBI" id="CHEBI:29986"/>
        <dbReference type="EC" id="5.1.1.3"/>
    </reaction>
</comment>
<comment type="pathway">
    <text evidence="1">Cell wall biogenesis; peptidoglycan biosynthesis.</text>
</comment>
<comment type="similarity">
    <text evidence="1">Belongs to the aspartate/glutamate racemases family.</text>
</comment>
<protein>
    <recommendedName>
        <fullName evidence="1">Glutamate racemase</fullName>
        <ecNumber evidence="1">5.1.1.3</ecNumber>
    </recommendedName>
</protein>
<gene>
    <name evidence="1" type="primary">murI</name>
    <name type="ordered locus">ECED1_4676</name>
</gene>
<accession>B7MR95</accession>
<reference key="1">
    <citation type="journal article" date="2009" name="PLoS Genet.">
        <title>Organised genome dynamics in the Escherichia coli species results in highly diverse adaptive paths.</title>
        <authorList>
            <person name="Touchon M."/>
            <person name="Hoede C."/>
            <person name="Tenaillon O."/>
            <person name="Barbe V."/>
            <person name="Baeriswyl S."/>
            <person name="Bidet P."/>
            <person name="Bingen E."/>
            <person name="Bonacorsi S."/>
            <person name="Bouchier C."/>
            <person name="Bouvet O."/>
            <person name="Calteau A."/>
            <person name="Chiapello H."/>
            <person name="Clermont O."/>
            <person name="Cruveiller S."/>
            <person name="Danchin A."/>
            <person name="Diard M."/>
            <person name="Dossat C."/>
            <person name="Karoui M.E."/>
            <person name="Frapy E."/>
            <person name="Garry L."/>
            <person name="Ghigo J.M."/>
            <person name="Gilles A.M."/>
            <person name="Johnson J."/>
            <person name="Le Bouguenec C."/>
            <person name="Lescat M."/>
            <person name="Mangenot S."/>
            <person name="Martinez-Jehanne V."/>
            <person name="Matic I."/>
            <person name="Nassif X."/>
            <person name="Oztas S."/>
            <person name="Petit M.A."/>
            <person name="Pichon C."/>
            <person name="Rouy Z."/>
            <person name="Ruf C.S."/>
            <person name="Schneider D."/>
            <person name="Tourret J."/>
            <person name="Vacherie B."/>
            <person name="Vallenet D."/>
            <person name="Medigue C."/>
            <person name="Rocha E.P.C."/>
            <person name="Denamur E."/>
        </authorList>
    </citation>
    <scope>NUCLEOTIDE SEQUENCE [LARGE SCALE GENOMIC DNA]</scope>
    <source>
        <strain>ED1a</strain>
    </source>
</reference>
<dbReference type="EC" id="5.1.1.3" evidence="1"/>
<dbReference type="EMBL" id="CU928162">
    <property type="protein sequence ID" value="CAR10783.2"/>
    <property type="molecule type" value="Genomic_DNA"/>
</dbReference>
<dbReference type="RefSeq" id="WP_001529515.1">
    <property type="nucleotide sequence ID" value="NC_011745.1"/>
</dbReference>
<dbReference type="SMR" id="B7MR95"/>
<dbReference type="KEGG" id="ecq:ECED1_4676"/>
<dbReference type="HOGENOM" id="CLU_052344_2_0_6"/>
<dbReference type="UniPathway" id="UPA00219"/>
<dbReference type="Proteomes" id="UP000000748">
    <property type="component" value="Chromosome"/>
</dbReference>
<dbReference type="GO" id="GO:0008881">
    <property type="term" value="F:glutamate racemase activity"/>
    <property type="evidence" value="ECO:0007669"/>
    <property type="project" value="UniProtKB-UniRule"/>
</dbReference>
<dbReference type="GO" id="GO:0071555">
    <property type="term" value="P:cell wall organization"/>
    <property type="evidence" value="ECO:0007669"/>
    <property type="project" value="UniProtKB-KW"/>
</dbReference>
<dbReference type="GO" id="GO:0009252">
    <property type="term" value="P:peptidoglycan biosynthetic process"/>
    <property type="evidence" value="ECO:0007669"/>
    <property type="project" value="UniProtKB-UniRule"/>
</dbReference>
<dbReference type="GO" id="GO:0008360">
    <property type="term" value="P:regulation of cell shape"/>
    <property type="evidence" value="ECO:0007669"/>
    <property type="project" value="UniProtKB-KW"/>
</dbReference>
<dbReference type="FunFam" id="3.40.50.1860:FF:000002">
    <property type="entry name" value="Glutamate racemase"/>
    <property type="match status" value="1"/>
</dbReference>
<dbReference type="Gene3D" id="3.40.50.1860">
    <property type="match status" value="2"/>
</dbReference>
<dbReference type="HAMAP" id="MF_00258">
    <property type="entry name" value="Glu_racemase"/>
    <property type="match status" value="1"/>
</dbReference>
<dbReference type="InterPro" id="IPR015942">
    <property type="entry name" value="Asp/Glu/hydantoin_racemase"/>
</dbReference>
<dbReference type="InterPro" id="IPR001920">
    <property type="entry name" value="Asp/Glu_race"/>
</dbReference>
<dbReference type="InterPro" id="IPR018187">
    <property type="entry name" value="Asp/Glu_racemase_AS_1"/>
</dbReference>
<dbReference type="InterPro" id="IPR033134">
    <property type="entry name" value="Asp/Glu_racemase_AS_2"/>
</dbReference>
<dbReference type="InterPro" id="IPR004391">
    <property type="entry name" value="Glu_race"/>
</dbReference>
<dbReference type="NCBIfam" id="TIGR00067">
    <property type="entry name" value="glut_race"/>
    <property type="match status" value="1"/>
</dbReference>
<dbReference type="NCBIfam" id="NF002034">
    <property type="entry name" value="PRK00865.1-1"/>
    <property type="match status" value="1"/>
</dbReference>
<dbReference type="PANTHER" id="PTHR21198">
    <property type="entry name" value="GLUTAMATE RACEMASE"/>
    <property type="match status" value="1"/>
</dbReference>
<dbReference type="PANTHER" id="PTHR21198:SF2">
    <property type="entry name" value="GLUTAMATE RACEMASE"/>
    <property type="match status" value="1"/>
</dbReference>
<dbReference type="Pfam" id="PF01177">
    <property type="entry name" value="Asp_Glu_race"/>
    <property type="match status" value="1"/>
</dbReference>
<dbReference type="SUPFAM" id="SSF53681">
    <property type="entry name" value="Aspartate/glutamate racemase"/>
    <property type="match status" value="2"/>
</dbReference>
<dbReference type="PROSITE" id="PS00923">
    <property type="entry name" value="ASP_GLU_RACEMASE_1"/>
    <property type="match status" value="1"/>
</dbReference>
<dbReference type="PROSITE" id="PS00924">
    <property type="entry name" value="ASP_GLU_RACEMASE_2"/>
    <property type="match status" value="1"/>
</dbReference>
<organism>
    <name type="scientific">Escherichia coli O81 (strain ED1a)</name>
    <dbReference type="NCBI Taxonomy" id="585397"/>
    <lineage>
        <taxon>Bacteria</taxon>
        <taxon>Pseudomonadati</taxon>
        <taxon>Pseudomonadota</taxon>
        <taxon>Gammaproteobacteria</taxon>
        <taxon>Enterobacterales</taxon>
        <taxon>Enterobacteriaceae</taxon>
        <taxon>Escherichia</taxon>
    </lineage>
</organism>